<proteinExistence type="inferred from homology"/>
<keyword id="KW-0010">Activator</keyword>
<keyword id="KW-0963">Cytoplasm</keyword>
<keyword id="KW-0238">DNA-binding</keyword>
<keyword id="KW-0804">Transcription</keyword>
<keyword id="KW-0805">Transcription regulation</keyword>
<dbReference type="EMBL" id="X04730">
    <property type="protein sequence ID" value="CAA28440.1"/>
    <property type="molecule type" value="Genomic_DNA"/>
</dbReference>
<dbReference type="PIR" id="A25686">
    <property type="entry name" value="A25686"/>
</dbReference>
<dbReference type="RefSeq" id="WP_003855952.1">
    <property type="nucleotide sequence ID" value="NZ_PEHU01000016.1"/>
</dbReference>
<dbReference type="SMR" id="P05051"/>
<dbReference type="eggNOG" id="COG0583">
    <property type="taxonomic scope" value="Bacteria"/>
</dbReference>
<dbReference type="GO" id="GO:0005737">
    <property type="term" value="C:cytoplasm"/>
    <property type="evidence" value="ECO:0007669"/>
    <property type="project" value="UniProtKB-SubCell"/>
</dbReference>
<dbReference type="GO" id="GO:0003700">
    <property type="term" value="F:DNA-binding transcription factor activity"/>
    <property type="evidence" value="ECO:0007669"/>
    <property type="project" value="InterPro"/>
</dbReference>
<dbReference type="GO" id="GO:0043565">
    <property type="term" value="F:sequence-specific DNA binding"/>
    <property type="evidence" value="ECO:0007669"/>
    <property type="project" value="TreeGrafter"/>
</dbReference>
<dbReference type="GO" id="GO:0006351">
    <property type="term" value="P:DNA-templated transcription"/>
    <property type="evidence" value="ECO:0007669"/>
    <property type="project" value="TreeGrafter"/>
</dbReference>
<dbReference type="FunFam" id="1.10.10.10:FF:000038">
    <property type="entry name" value="Glycine cleavage system transcriptional activator"/>
    <property type="match status" value="1"/>
</dbReference>
<dbReference type="Gene3D" id="3.40.190.10">
    <property type="entry name" value="Periplasmic binding protein-like II"/>
    <property type="match status" value="2"/>
</dbReference>
<dbReference type="Gene3D" id="1.10.10.10">
    <property type="entry name" value="Winged helix-like DNA-binding domain superfamily/Winged helix DNA-binding domain"/>
    <property type="match status" value="1"/>
</dbReference>
<dbReference type="InterPro" id="IPR005119">
    <property type="entry name" value="LysR_subst-bd"/>
</dbReference>
<dbReference type="InterPro" id="IPR000847">
    <property type="entry name" value="Tscrpt_reg_HTH_LysR"/>
</dbReference>
<dbReference type="InterPro" id="IPR036388">
    <property type="entry name" value="WH-like_DNA-bd_sf"/>
</dbReference>
<dbReference type="InterPro" id="IPR036390">
    <property type="entry name" value="WH_DNA-bd_sf"/>
</dbReference>
<dbReference type="PANTHER" id="PTHR30537:SF70">
    <property type="entry name" value="HTH-TYPE TRANSCRIPTIONAL ACTIVATOR AMPR"/>
    <property type="match status" value="1"/>
</dbReference>
<dbReference type="PANTHER" id="PTHR30537">
    <property type="entry name" value="HTH-TYPE TRANSCRIPTIONAL REGULATOR"/>
    <property type="match status" value="1"/>
</dbReference>
<dbReference type="Pfam" id="PF00126">
    <property type="entry name" value="HTH_1"/>
    <property type="match status" value="1"/>
</dbReference>
<dbReference type="Pfam" id="PF03466">
    <property type="entry name" value="LysR_substrate"/>
    <property type="match status" value="1"/>
</dbReference>
<dbReference type="PRINTS" id="PR00039">
    <property type="entry name" value="HTHLYSR"/>
</dbReference>
<dbReference type="SUPFAM" id="SSF53850">
    <property type="entry name" value="Periplasmic binding protein-like II"/>
    <property type="match status" value="1"/>
</dbReference>
<dbReference type="SUPFAM" id="SSF46785">
    <property type="entry name" value="Winged helix' DNA-binding domain"/>
    <property type="match status" value="1"/>
</dbReference>
<dbReference type="PROSITE" id="PS50931">
    <property type="entry name" value="HTH_LYSR"/>
    <property type="match status" value="1"/>
</dbReference>
<feature type="initiator methionine" description="Removed" evidence="1">
    <location>
        <position position="1"/>
    </location>
</feature>
<feature type="chain" id="PRO_0000105587" description="HTH-type transcriptional activator AmpR">
    <location>
        <begin position="2"/>
        <end position="291"/>
    </location>
</feature>
<feature type="domain" description="HTH lysR-type" evidence="2">
    <location>
        <begin position="6"/>
        <end position="63"/>
    </location>
</feature>
<feature type="DNA-binding region" description="H-T-H motif" evidence="2">
    <location>
        <begin position="23"/>
        <end position="42"/>
    </location>
</feature>
<protein>
    <recommendedName>
        <fullName>HTH-type transcriptional activator AmpR</fullName>
    </recommendedName>
</protein>
<evidence type="ECO:0000250" key="1"/>
<evidence type="ECO:0000255" key="2">
    <source>
        <dbReference type="PROSITE-ProRule" id="PRU00253"/>
    </source>
</evidence>
<evidence type="ECO:0000305" key="3"/>
<comment type="function">
    <text>This protein is a positive regulator of gene expression of cephalosporinase (AmpC).</text>
</comment>
<comment type="subcellular location">
    <subcellularLocation>
        <location>Cytoplasm</location>
    </subcellularLocation>
</comment>
<comment type="similarity">
    <text evidence="3">Belongs to the LysR transcriptional regulatory family.</text>
</comment>
<accession>P05051</accession>
<gene>
    <name type="primary">ampR</name>
</gene>
<name>AMPR_ENTCL</name>
<organism>
    <name type="scientific">Enterobacter cloacae</name>
    <dbReference type="NCBI Taxonomy" id="550"/>
    <lineage>
        <taxon>Bacteria</taxon>
        <taxon>Pseudomonadati</taxon>
        <taxon>Pseudomonadota</taxon>
        <taxon>Gammaproteobacteria</taxon>
        <taxon>Enterobacterales</taxon>
        <taxon>Enterobacteriaceae</taxon>
        <taxon>Enterobacter</taxon>
        <taxon>Enterobacter cloacae complex</taxon>
    </lineage>
</organism>
<sequence>MTRSYLPLNSLRAFEAAARHLSFTHAAIELNVTHSAISQHVKTLEQHLNCQLFVRVSRGLMLTTEGENLLPVLNDSFDRIAGMLDRFANHRAQEKLKIGVVGTFATGVLFSQLEDFRRGYPHIDLQLSTHNNRVDPAAEGLDYTIRYGGGAWHGTEAEFLCHAPLAPLCTPDIAASLHSPADILRFTLLRSYRRDEWTAWMQAAGEHPPSPTHRVMVFDSSVTMLEAAQAGVGIAIAPVDMFTHLLASERIVQPFATQIELGSYWLTRLQSRAETPAMREFSRWLVEKMKK</sequence>
<reference key="1">
    <citation type="journal article" date="1986" name="EMBO J.">
        <title>Inducible cephalosporinase production in clinical isolates of Enterobacter cloacae is controlled by a regulatory gene that has been deleted from Escherichia coli.</title>
        <authorList>
            <person name="Honore N."/>
            <person name="Nicolas M.H."/>
            <person name="Cole S.T."/>
        </authorList>
    </citation>
    <scope>NUCLEOTIDE SEQUENCE [GENOMIC DNA]</scope>
</reference>